<protein>
    <recommendedName>
        <fullName evidence="1">3-isopropylmalate dehydratase small subunit</fullName>
        <ecNumber evidence="1">4.2.1.33</ecNumber>
    </recommendedName>
    <alternativeName>
        <fullName evidence="1">Alpha-IPM isomerase</fullName>
        <shortName evidence="1">IPMI</shortName>
    </alternativeName>
    <alternativeName>
        <fullName evidence="1">Isopropylmalate isomerase</fullName>
    </alternativeName>
</protein>
<dbReference type="EC" id="4.2.1.33" evidence="1"/>
<dbReference type="EMBL" id="AF251027">
    <property type="protein sequence ID" value="AAK28430.1"/>
    <property type="molecule type" value="Genomic_DNA"/>
</dbReference>
<dbReference type="RefSeq" id="WP_008808885.1">
    <property type="nucleotide sequence ID" value="NZ_LR594041.1"/>
</dbReference>
<dbReference type="SMR" id="Q9AIM2"/>
<dbReference type="OMA" id="FGQHLFH"/>
<dbReference type="UniPathway" id="UPA00048">
    <property type="reaction ID" value="UER00071"/>
</dbReference>
<dbReference type="GO" id="GO:0009316">
    <property type="term" value="C:3-isopropylmalate dehydratase complex"/>
    <property type="evidence" value="ECO:0007669"/>
    <property type="project" value="InterPro"/>
</dbReference>
<dbReference type="GO" id="GO:0003861">
    <property type="term" value="F:3-isopropylmalate dehydratase activity"/>
    <property type="evidence" value="ECO:0007669"/>
    <property type="project" value="UniProtKB-UniRule"/>
</dbReference>
<dbReference type="GO" id="GO:0009098">
    <property type="term" value="P:L-leucine biosynthetic process"/>
    <property type="evidence" value="ECO:0007669"/>
    <property type="project" value="UniProtKB-UniRule"/>
</dbReference>
<dbReference type="CDD" id="cd01577">
    <property type="entry name" value="IPMI_Swivel"/>
    <property type="match status" value="1"/>
</dbReference>
<dbReference type="FunFam" id="3.20.19.10:FF:000003">
    <property type="entry name" value="3-isopropylmalate dehydratase small subunit"/>
    <property type="match status" value="1"/>
</dbReference>
<dbReference type="Gene3D" id="3.20.19.10">
    <property type="entry name" value="Aconitase, domain 4"/>
    <property type="match status" value="1"/>
</dbReference>
<dbReference type="HAMAP" id="MF_01031">
    <property type="entry name" value="LeuD_type1"/>
    <property type="match status" value="1"/>
</dbReference>
<dbReference type="InterPro" id="IPR004431">
    <property type="entry name" value="3-IsopropMal_deHydase_ssu"/>
</dbReference>
<dbReference type="InterPro" id="IPR015928">
    <property type="entry name" value="Aconitase/3IPM_dehydase_swvl"/>
</dbReference>
<dbReference type="InterPro" id="IPR000573">
    <property type="entry name" value="AconitaseA/IPMdHydase_ssu_swvl"/>
</dbReference>
<dbReference type="InterPro" id="IPR033940">
    <property type="entry name" value="IPMI_Swivel"/>
</dbReference>
<dbReference type="InterPro" id="IPR050075">
    <property type="entry name" value="LeuD"/>
</dbReference>
<dbReference type="NCBIfam" id="TIGR00171">
    <property type="entry name" value="leuD"/>
    <property type="match status" value="1"/>
</dbReference>
<dbReference type="NCBIfam" id="NF002458">
    <property type="entry name" value="PRK01641.1"/>
    <property type="match status" value="1"/>
</dbReference>
<dbReference type="PANTHER" id="PTHR43345:SF5">
    <property type="entry name" value="3-ISOPROPYLMALATE DEHYDRATASE SMALL SUBUNIT"/>
    <property type="match status" value="1"/>
</dbReference>
<dbReference type="PANTHER" id="PTHR43345">
    <property type="entry name" value="3-ISOPROPYLMALATE DEHYDRATASE SMALL SUBUNIT 2-RELATED-RELATED"/>
    <property type="match status" value="1"/>
</dbReference>
<dbReference type="Pfam" id="PF00694">
    <property type="entry name" value="Aconitase_C"/>
    <property type="match status" value="1"/>
</dbReference>
<dbReference type="SUPFAM" id="SSF52016">
    <property type="entry name" value="LeuD/IlvD-like"/>
    <property type="match status" value="1"/>
</dbReference>
<comment type="function">
    <text evidence="1">Catalyzes the isomerization between 2-isopropylmalate and 3-isopropylmalate, via the formation of 2-isopropylmaleate.</text>
</comment>
<comment type="catalytic activity">
    <reaction evidence="1">
        <text>(2R,3S)-3-isopropylmalate = (2S)-2-isopropylmalate</text>
        <dbReference type="Rhea" id="RHEA:32287"/>
        <dbReference type="ChEBI" id="CHEBI:1178"/>
        <dbReference type="ChEBI" id="CHEBI:35121"/>
        <dbReference type="EC" id="4.2.1.33"/>
    </reaction>
</comment>
<comment type="pathway">
    <text evidence="1">Amino-acid biosynthesis; L-leucine biosynthesis; L-leucine from 3-methyl-2-oxobutanoate: step 2/4.</text>
</comment>
<comment type="subunit">
    <text evidence="1">Heterodimer of LeuC and LeuD.</text>
</comment>
<comment type="similarity">
    <text evidence="1">Belongs to the LeuD family. LeuD type 1 subfamily.</text>
</comment>
<feature type="chain" id="PRO_0000141892" description="3-isopropylmalate dehydratase small subunit">
    <location>
        <begin position="1"/>
        <end position="196"/>
    </location>
</feature>
<name>LEUD_STRGN</name>
<sequence>MEKFTIYTGTTVPLMNDNIDTDQILPKQFLKLIDKKGFGKYLMYAWRYLDNQYTEDPDFVFNRPEYRKATILITGDNFGAGSSREHAAWALADYGFKVVIAGSFGDIHYNNELNNGMLPIVQPLEVRQALANLKPTDQVTVDLEQQKIFSPVGEFSFDIDGEWKHKLLNGLDDIGITLLYEDLIAEYEKNRPSYWQ</sequence>
<accession>Q9AIM2</accession>
<gene>
    <name evidence="1" type="primary">leuD</name>
</gene>
<proteinExistence type="inferred from homology"/>
<reference key="1">
    <citation type="journal article" date="2001" name="J. Mol. Microbiol. Biotechnol.">
        <title>Studies on the genomic organization of recombinant Streptococcus gordonii and the development of a novel intergenic integration site for foreign gene expression.</title>
        <authorList>
            <person name="Franke C.A."/>
            <person name="Bolken T.C."/>
            <person name="Hruby D.E."/>
        </authorList>
    </citation>
    <scope>NUCLEOTIDE SEQUENCE [GENOMIC DNA]</scope>
    <source>
        <strain>GP1223</strain>
    </source>
</reference>
<keyword id="KW-0028">Amino-acid biosynthesis</keyword>
<keyword id="KW-0100">Branched-chain amino acid biosynthesis</keyword>
<keyword id="KW-0432">Leucine biosynthesis</keyword>
<keyword id="KW-0456">Lyase</keyword>
<evidence type="ECO:0000255" key="1">
    <source>
        <dbReference type="HAMAP-Rule" id="MF_01031"/>
    </source>
</evidence>
<organism>
    <name type="scientific">Streptococcus gordonii</name>
    <dbReference type="NCBI Taxonomy" id="1302"/>
    <lineage>
        <taxon>Bacteria</taxon>
        <taxon>Bacillati</taxon>
        <taxon>Bacillota</taxon>
        <taxon>Bacilli</taxon>
        <taxon>Lactobacillales</taxon>
        <taxon>Streptococcaceae</taxon>
        <taxon>Streptococcus</taxon>
    </lineage>
</organism>